<organism>
    <name type="scientific">Bifidobacterium breve</name>
    <dbReference type="NCBI Taxonomy" id="1685"/>
    <lineage>
        <taxon>Bacteria</taxon>
        <taxon>Bacillati</taxon>
        <taxon>Actinomycetota</taxon>
        <taxon>Actinomycetes</taxon>
        <taxon>Bifidobacteriales</taxon>
        <taxon>Bifidobacteriaceae</taxon>
        <taxon>Bifidobacterium</taxon>
    </lineage>
</organism>
<sequence length="392" mass="41416">MALETKPAQDPATEIKHELDPKRKAALDTALAQVEKSFGKGSAMRLGDQPVQNVEVIPTGSLALDMALGIGGLPKGRIVEIYGPESSGKTTLALHVVANAQKKGGVAAYIDAEHALDPAYARKLGVDTDSLIVSQPDNGEQALEIADMLIRSGALDVIVIDSVAALVPKAEIEGEMGDSHVGLQARLMSQALRKMTGALAQAGTTAIFINQLREKIGVFFGNPETTTGGKALKFYASVRLDIRRIQTLKNGDEAVGNRTRVKVVKNKMAPPFKSAEFDMLYGEGISREGSVIDMAQQVGVVKKSGSWFTYEGDQLGQGREKVRQFLKDNPAITEEIENKVKAEFGLIGSADQFAEDEDAAAAAAVSEAAAADAAKDTKATAAPAAKSSRAKA</sequence>
<reference key="1">
    <citation type="submission" date="1998-09" db="EMBL/GenBank/DDBJ databases">
        <title>Identification and sequencing of a chromosomally encoded recA gene homolog from Bifidobacterium breve NCFB 2258 and analysis of the downstream flanking region.</title>
        <authorList>
            <person name="O'Riordan K."/>
            <person name="Fitzgerald G.F."/>
        </authorList>
    </citation>
    <scope>NUCLEOTIDE SEQUENCE [GENOMIC DNA]</scope>
    <source>
        <strain>NCFB 2258</strain>
    </source>
</reference>
<keyword id="KW-0067">ATP-binding</keyword>
<keyword id="KW-0963">Cytoplasm</keyword>
<keyword id="KW-0227">DNA damage</keyword>
<keyword id="KW-0233">DNA recombination</keyword>
<keyword id="KW-0234">DNA repair</keyword>
<keyword id="KW-0238">DNA-binding</keyword>
<keyword id="KW-0547">Nucleotide-binding</keyword>
<keyword id="KW-0742">SOS response</keyword>
<accession>Q9S660</accession>
<protein>
    <recommendedName>
        <fullName evidence="1">Protein RecA</fullName>
    </recommendedName>
    <alternativeName>
        <fullName evidence="1">Recombinase A</fullName>
    </alternativeName>
</protein>
<evidence type="ECO:0000255" key="1">
    <source>
        <dbReference type="HAMAP-Rule" id="MF_00268"/>
    </source>
</evidence>
<evidence type="ECO:0000256" key="2">
    <source>
        <dbReference type="SAM" id="MobiDB-lite"/>
    </source>
</evidence>
<proteinExistence type="inferred from homology"/>
<comment type="function">
    <text evidence="1">Can catalyze the hydrolysis of ATP in the presence of single-stranded DNA, the ATP-dependent uptake of single-stranded DNA by duplex DNA, and the ATP-dependent hybridization of homologous single-stranded DNAs. It interacts with LexA causing its activation and leading to its autocatalytic cleavage.</text>
</comment>
<comment type="subcellular location">
    <subcellularLocation>
        <location evidence="1">Cytoplasm</location>
    </subcellularLocation>
</comment>
<comment type="similarity">
    <text evidence="1">Belongs to the RecA family.</text>
</comment>
<name>RECA_BIFBR</name>
<dbReference type="EMBL" id="AF094756">
    <property type="protein sequence ID" value="AAD20261.1"/>
    <property type="molecule type" value="Genomic_DNA"/>
</dbReference>
<dbReference type="RefSeq" id="WP_025263037.1">
    <property type="nucleotide sequence ID" value="NZ_CP102536.1"/>
</dbReference>
<dbReference type="SMR" id="Q9S660"/>
<dbReference type="GO" id="GO:0005829">
    <property type="term" value="C:cytosol"/>
    <property type="evidence" value="ECO:0007669"/>
    <property type="project" value="TreeGrafter"/>
</dbReference>
<dbReference type="GO" id="GO:0005524">
    <property type="term" value="F:ATP binding"/>
    <property type="evidence" value="ECO:0007669"/>
    <property type="project" value="UniProtKB-UniRule"/>
</dbReference>
<dbReference type="GO" id="GO:0016887">
    <property type="term" value="F:ATP hydrolysis activity"/>
    <property type="evidence" value="ECO:0007669"/>
    <property type="project" value="InterPro"/>
</dbReference>
<dbReference type="GO" id="GO:0140664">
    <property type="term" value="F:ATP-dependent DNA damage sensor activity"/>
    <property type="evidence" value="ECO:0007669"/>
    <property type="project" value="InterPro"/>
</dbReference>
<dbReference type="GO" id="GO:0003684">
    <property type="term" value="F:damaged DNA binding"/>
    <property type="evidence" value="ECO:0007669"/>
    <property type="project" value="UniProtKB-UniRule"/>
</dbReference>
<dbReference type="GO" id="GO:0003697">
    <property type="term" value="F:single-stranded DNA binding"/>
    <property type="evidence" value="ECO:0007669"/>
    <property type="project" value="UniProtKB-UniRule"/>
</dbReference>
<dbReference type="GO" id="GO:0006310">
    <property type="term" value="P:DNA recombination"/>
    <property type="evidence" value="ECO:0007669"/>
    <property type="project" value="UniProtKB-UniRule"/>
</dbReference>
<dbReference type="GO" id="GO:0006281">
    <property type="term" value="P:DNA repair"/>
    <property type="evidence" value="ECO:0007669"/>
    <property type="project" value="UniProtKB-UniRule"/>
</dbReference>
<dbReference type="GO" id="GO:0009432">
    <property type="term" value="P:SOS response"/>
    <property type="evidence" value="ECO:0007669"/>
    <property type="project" value="UniProtKB-UniRule"/>
</dbReference>
<dbReference type="CDD" id="cd00983">
    <property type="entry name" value="RecA"/>
    <property type="match status" value="1"/>
</dbReference>
<dbReference type="FunFam" id="3.40.50.300:FF:000087">
    <property type="entry name" value="Recombinase RecA"/>
    <property type="match status" value="1"/>
</dbReference>
<dbReference type="Gene3D" id="3.40.50.300">
    <property type="entry name" value="P-loop containing nucleotide triphosphate hydrolases"/>
    <property type="match status" value="1"/>
</dbReference>
<dbReference type="HAMAP" id="MF_00268">
    <property type="entry name" value="RecA"/>
    <property type="match status" value="1"/>
</dbReference>
<dbReference type="InterPro" id="IPR003593">
    <property type="entry name" value="AAA+_ATPase"/>
</dbReference>
<dbReference type="InterPro" id="IPR013765">
    <property type="entry name" value="DNA_recomb/repair_RecA"/>
</dbReference>
<dbReference type="InterPro" id="IPR020584">
    <property type="entry name" value="DNA_recomb/repair_RecA_CS"/>
</dbReference>
<dbReference type="InterPro" id="IPR027417">
    <property type="entry name" value="P-loop_NTPase"/>
</dbReference>
<dbReference type="InterPro" id="IPR049261">
    <property type="entry name" value="RecA-like_C"/>
</dbReference>
<dbReference type="InterPro" id="IPR049428">
    <property type="entry name" value="RecA-like_N"/>
</dbReference>
<dbReference type="InterPro" id="IPR020588">
    <property type="entry name" value="RecA_ATP-bd"/>
</dbReference>
<dbReference type="InterPro" id="IPR023400">
    <property type="entry name" value="RecA_C_sf"/>
</dbReference>
<dbReference type="InterPro" id="IPR020587">
    <property type="entry name" value="RecA_monomer-monomer_interface"/>
</dbReference>
<dbReference type="NCBIfam" id="TIGR02012">
    <property type="entry name" value="tigrfam_recA"/>
    <property type="match status" value="1"/>
</dbReference>
<dbReference type="PANTHER" id="PTHR45900:SF1">
    <property type="entry name" value="MITOCHONDRIAL DNA REPAIR PROTEIN RECA HOMOLOG-RELATED"/>
    <property type="match status" value="1"/>
</dbReference>
<dbReference type="PANTHER" id="PTHR45900">
    <property type="entry name" value="RECA"/>
    <property type="match status" value="1"/>
</dbReference>
<dbReference type="Pfam" id="PF00154">
    <property type="entry name" value="RecA"/>
    <property type="match status" value="1"/>
</dbReference>
<dbReference type="Pfam" id="PF21096">
    <property type="entry name" value="RecA_C"/>
    <property type="match status" value="1"/>
</dbReference>
<dbReference type="PRINTS" id="PR00142">
    <property type="entry name" value="RECA"/>
</dbReference>
<dbReference type="SMART" id="SM00382">
    <property type="entry name" value="AAA"/>
    <property type="match status" value="1"/>
</dbReference>
<dbReference type="SUPFAM" id="SSF52540">
    <property type="entry name" value="P-loop containing nucleoside triphosphate hydrolases"/>
    <property type="match status" value="1"/>
</dbReference>
<dbReference type="SUPFAM" id="SSF54752">
    <property type="entry name" value="RecA protein, C-terminal domain"/>
    <property type="match status" value="1"/>
</dbReference>
<dbReference type="PROSITE" id="PS00321">
    <property type="entry name" value="RECA_1"/>
    <property type="match status" value="1"/>
</dbReference>
<dbReference type="PROSITE" id="PS50162">
    <property type="entry name" value="RECA_2"/>
    <property type="match status" value="1"/>
</dbReference>
<dbReference type="PROSITE" id="PS50163">
    <property type="entry name" value="RECA_3"/>
    <property type="match status" value="1"/>
</dbReference>
<gene>
    <name evidence="1" type="primary">recA</name>
</gene>
<feature type="chain" id="PRO_0000122661" description="Protein RecA">
    <location>
        <begin position="1"/>
        <end position="392"/>
    </location>
</feature>
<feature type="region of interest" description="Disordered" evidence="2">
    <location>
        <begin position="1"/>
        <end position="21"/>
    </location>
</feature>
<feature type="region of interest" description="Disordered" evidence="2">
    <location>
        <begin position="372"/>
        <end position="392"/>
    </location>
</feature>
<feature type="compositionally biased region" description="Low complexity" evidence="2">
    <location>
        <begin position="379"/>
        <end position="392"/>
    </location>
</feature>
<feature type="binding site" evidence="1">
    <location>
        <begin position="83"/>
        <end position="90"/>
    </location>
    <ligand>
        <name>ATP</name>
        <dbReference type="ChEBI" id="CHEBI:30616"/>
    </ligand>
</feature>